<organism>
    <name type="scientific">Hepatitis E virus genotype 1 (isolate Human/Myanmar/HEVNE8L)</name>
    <name type="common">HEV-1</name>
    <dbReference type="NCBI Taxonomy" id="31769"/>
    <lineage>
        <taxon>Viruses</taxon>
        <taxon>Riboviria</taxon>
        <taxon>Orthornavirae</taxon>
        <taxon>Kitrinoviricota</taxon>
        <taxon>Alsuviricetes</taxon>
        <taxon>Hepelivirales</taxon>
        <taxon>Hepeviridae</taxon>
        <taxon>Orthohepevirinae</taxon>
        <taxon>Paslahepevirus</taxon>
        <taxon>Hepatitis E virus</taxon>
    </lineage>
</organism>
<dbReference type="EC" id="2.1.1.-" evidence="11"/>
<dbReference type="EC" id="2.7.7.-" evidence="4"/>
<dbReference type="EC" id="3.4.-.-" evidence="4"/>
<dbReference type="EC" id="3.6.4.-" evidence="4"/>
<dbReference type="EC" id="2.7.7.48"/>
<dbReference type="EMBL" id="D10330">
    <property type="protein sequence ID" value="BAA01172.1"/>
    <property type="molecule type" value="Genomic_RNA"/>
</dbReference>
<dbReference type="SMR" id="Q04610"/>
<dbReference type="Proteomes" id="UP000007246">
    <property type="component" value="Genome"/>
</dbReference>
<dbReference type="GO" id="GO:0044220">
    <property type="term" value="C:host cell perinuclear region of cytoplasm"/>
    <property type="evidence" value="ECO:0007669"/>
    <property type="project" value="UniProtKB-SubCell"/>
</dbReference>
<dbReference type="GO" id="GO:0005524">
    <property type="term" value="F:ATP binding"/>
    <property type="evidence" value="ECO:0007669"/>
    <property type="project" value="UniProtKB-KW"/>
</dbReference>
<dbReference type="GO" id="GO:0008234">
    <property type="term" value="F:cysteine-type peptidase activity"/>
    <property type="evidence" value="ECO:0007669"/>
    <property type="project" value="UniProtKB-KW"/>
</dbReference>
<dbReference type="GO" id="GO:0004386">
    <property type="term" value="F:helicase activity"/>
    <property type="evidence" value="ECO:0007669"/>
    <property type="project" value="UniProtKB-KW"/>
</dbReference>
<dbReference type="GO" id="GO:0046872">
    <property type="term" value="F:metal ion binding"/>
    <property type="evidence" value="ECO:0007669"/>
    <property type="project" value="UniProtKB-KW"/>
</dbReference>
<dbReference type="GO" id="GO:0008174">
    <property type="term" value="F:mRNA methyltransferase activity"/>
    <property type="evidence" value="ECO:0007669"/>
    <property type="project" value="InterPro"/>
</dbReference>
<dbReference type="GO" id="GO:0003723">
    <property type="term" value="F:RNA binding"/>
    <property type="evidence" value="ECO:0007669"/>
    <property type="project" value="UniProtKB-KW"/>
</dbReference>
<dbReference type="GO" id="GO:0003968">
    <property type="term" value="F:RNA-directed RNA polymerase activity"/>
    <property type="evidence" value="ECO:0007669"/>
    <property type="project" value="UniProtKB-KW"/>
</dbReference>
<dbReference type="GO" id="GO:0006351">
    <property type="term" value="P:DNA-templated transcription"/>
    <property type="evidence" value="ECO:0007669"/>
    <property type="project" value="InterPro"/>
</dbReference>
<dbReference type="GO" id="GO:0032259">
    <property type="term" value="P:methylation"/>
    <property type="evidence" value="ECO:0007669"/>
    <property type="project" value="UniProtKB-KW"/>
</dbReference>
<dbReference type="GO" id="GO:0016556">
    <property type="term" value="P:mRNA modification"/>
    <property type="evidence" value="ECO:0007669"/>
    <property type="project" value="InterPro"/>
</dbReference>
<dbReference type="GO" id="GO:0006508">
    <property type="term" value="P:proteolysis"/>
    <property type="evidence" value="ECO:0007669"/>
    <property type="project" value="UniProtKB-KW"/>
</dbReference>
<dbReference type="GO" id="GO:0006396">
    <property type="term" value="P:RNA processing"/>
    <property type="evidence" value="ECO:0007669"/>
    <property type="project" value="InterPro"/>
</dbReference>
<dbReference type="GO" id="GO:0019082">
    <property type="term" value="P:viral protein processing"/>
    <property type="evidence" value="ECO:0007669"/>
    <property type="project" value="InterPro"/>
</dbReference>
<dbReference type="GO" id="GO:0039694">
    <property type="term" value="P:viral RNA genome replication"/>
    <property type="evidence" value="ECO:0007669"/>
    <property type="project" value="InterPro"/>
</dbReference>
<dbReference type="CDD" id="cd23259">
    <property type="entry name" value="Hepeviridae_RdRp"/>
    <property type="match status" value="1"/>
</dbReference>
<dbReference type="CDD" id="cd21557">
    <property type="entry name" value="Macro_X_Nsp3-like"/>
    <property type="match status" value="1"/>
</dbReference>
<dbReference type="Gene3D" id="3.40.220.10">
    <property type="entry name" value="Leucine Aminopeptidase, subunit E, domain 1"/>
    <property type="match status" value="1"/>
</dbReference>
<dbReference type="Gene3D" id="3.40.50.300">
    <property type="entry name" value="P-loop containing nucleotide triphosphate hydrolases"/>
    <property type="match status" value="2"/>
</dbReference>
<dbReference type="InterPro" id="IPR027351">
    <property type="entry name" value="(+)RNA_virus_helicase_core_dom"/>
</dbReference>
<dbReference type="InterPro" id="IPR002588">
    <property type="entry name" value="Alphavirus-like_MT_dom"/>
</dbReference>
<dbReference type="InterPro" id="IPR043502">
    <property type="entry name" value="DNA/RNA_pol_sf"/>
</dbReference>
<dbReference type="InterPro" id="IPR008748">
    <property type="entry name" value="Hepatitis-E_Cys-pept"/>
</dbReference>
<dbReference type="InterPro" id="IPR022202">
    <property type="entry name" value="Hepatitis-E_hinge"/>
</dbReference>
<dbReference type="InterPro" id="IPR047307">
    <property type="entry name" value="Hepeviridae_RdRp"/>
</dbReference>
<dbReference type="InterPro" id="IPR002589">
    <property type="entry name" value="Macro_dom"/>
</dbReference>
<dbReference type="InterPro" id="IPR043472">
    <property type="entry name" value="Macro_dom-like"/>
</dbReference>
<dbReference type="InterPro" id="IPR044371">
    <property type="entry name" value="Macro_X_NSP3-like"/>
</dbReference>
<dbReference type="InterPro" id="IPR027417">
    <property type="entry name" value="P-loop_NTPase"/>
</dbReference>
<dbReference type="InterPro" id="IPR001788">
    <property type="entry name" value="RNA-dep_RNA_pol_alsuvir"/>
</dbReference>
<dbReference type="InterPro" id="IPR007094">
    <property type="entry name" value="RNA-dir_pol_PSvirus"/>
</dbReference>
<dbReference type="Pfam" id="PF12526">
    <property type="entry name" value="DUF3729"/>
    <property type="match status" value="1"/>
</dbReference>
<dbReference type="Pfam" id="PF01661">
    <property type="entry name" value="Macro"/>
    <property type="match status" value="1"/>
</dbReference>
<dbReference type="Pfam" id="PF05417">
    <property type="entry name" value="Peptidase_C41"/>
    <property type="match status" value="1"/>
</dbReference>
<dbReference type="Pfam" id="PF00978">
    <property type="entry name" value="RdRP_2"/>
    <property type="match status" value="1"/>
</dbReference>
<dbReference type="Pfam" id="PF01443">
    <property type="entry name" value="Viral_helicase1"/>
    <property type="match status" value="1"/>
</dbReference>
<dbReference type="Pfam" id="PF01660">
    <property type="entry name" value="Vmethyltransf"/>
    <property type="match status" value="1"/>
</dbReference>
<dbReference type="SMART" id="SM00506">
    <property type="entry name" value="A1pp"/>
    <property type="match status" value="1"/>
</dbReference>
<dbReference type="SUPFAM" id="SSF56672">
    <property type="entry name" value="DNA/RNA polymerases"/>
    <property type="match status" value="1"/>
</dbReference>
<dbReference type="SUPFAM" id="SSF52949">
    <property type="entry name" value="Macro domain-like"/>
    <property type="match status" value="1"/>
</dbReference>
<dbReference type="SUPFAM" id="SSF52540">
    <property type="entry name" value="P-loop containing nucleoside triphosphate hydrolases"/>
    <property type="match status" value="1"/>
</dbReference>
<dbReference type="PROSITE" id="PS51743">
    <property type="entry name" value="ALPHAVIRUS_MT"/>
    <property type="match status" value="1"/>
</dbReference>
<dbReference type="PROSITE" id="PS51154">
    <property type="entry name" value="MACRO"/>
    <property type="match status" value="1"/>
</dbReference>
<dbReference type="PROSITE" id="PS51657">
    <property type="entry name" value="PSRV_HELICASE"/>
    <property type="match status" value="1"/>
</dbReference>
<dbReference type="PROSITE" id="PS50507">
    <property type="entry name" value="RDRP_SSRNA_POS"/>
    <property type="match status" value="1"/>
</dbReference>
<gene>
    <name type="ORF">ORF1</name>
</gene>
<evidence type="ECO:0000250" key="1"/>
<evidence type="ECO:0000250" key="2">
    <source>
        <dbReference type="UniProtKB" id="P29324"/>
    </source>
</evidence>
<evidence type="ECO:0000250" key="3">
    <source>
        <dbReference type="UniProtKB" id="P33424"/>
    </source>
</evidence>
<evidence type="ECO:0000250" key="4">
    <source>
        <dbReference type="UniProtKB" id="Q81862"/>
    </source>
</evidence>
<evidence type="ECO:0000250" key="5">
    <source>
        <dbReference type="UniProtKB" id="Q9WC28"/>
    </source>
</evidence>
<evidence type="ECO:0000255" key="6"/>
<evidence type="ECO:0000255" key="7">
    <source>
        <dbReference type="PROSITE-ProRule" id="PRU00490"/>
    </source>
</evidence>
<evidence type="ECO:0000255" key="8">
    <source>
        <dbReference type="PROSITE-ProRule" id="PRU00539"/>
    </source>
</evidence>
<evidence type="ECO:0000255" key="9">
    <source>
        <dbReference type="PROSITE-ProRule" id="PRU01079"/>
    </source>
</evidence>
<evidence type="ECO:0000256" key="10">
    <source>
        <dbReference type="SAM" id="MobiDB-lite"/>
    </source>
</evidence>
<evidence type="ECO:0000269" key="11">
    <source>
    </source>
</evidence>
<evidence type="ECO:0000305" key="12"/>
<reference key="1">
    <citation type="journal article" date="1993" name="Virus Genes">
        <title>Sequence and gene structure of the hepatitis E virus isolated from Myanmar.</title>
        <authorList>
            <person name="Aye T.T."/>
            <person name="Uchida T."/>
            <person name="Ma M.Z."/>
            <person name="Iida F."/>
            <person name="Shikata T."/>
            <person name="Ichikawa M."/>
            <person name="Rikihisa T."/>
            <person name="Winn K."/>
        </authorList>
    </citation>
    <scope>NUCLEOTIDE SEQUENCE [GENOMIC RNA]</scope>
</reference>
<reference key="2">
    <citation type="journal article" date="2001" name="J. Virol.">
        <title>Virus-specific mRNA capping enzyme encoded by hepatitis E virus.</title>
        <authorList>
            <person name="Magden J."/>
            <person name="Takeda N."/>
            <person name="Li T."/>
            <person name="Auvinen P."/>
            <person name="Ahola T."/>
            <person name="Miyamura T."/>
            <person name="Merits A."/>
            <person name="Kaeaeriaeinen L."/>
        </authorList>
    </citation>
    <scope>CATALYTIC ACTIVITY (METHYLTRANSFERASE)</scope>
    <scope>FUNCTION (METHYLTRANSFERASE)</scope>
</reference>
<name>POLN_HEVMY</name>
<sequence>MEAHQFIKAHGITTAIEQAALAAANSALANAVVVRPFLSHQQIEILINLMQPRQLVFRPEVFWNHPIQRVIHNELELYCRARSGRCLEIGAHPRSINDNPNVVHRCFLLPVGRDVQRWYTAPTRGPAANCRRSALRGLPAVDRTYCLDGFSGCNFPAETGIALYSLHDMSPSDVAEAMFRHGMTRLYAALHLPPEVLLPPGTYRTASYLLIHDGRRVVVTYEGDTSAGYNHDVSNLRSWIRTTKVTGDHPLVIERVRAIGCHFVLLLTAAPEPSPMPYVPYPRSTEVYVRSIFGPGGTPSLFPTSCSTKSTFHAVPAHIWDRLMLFGATLDDQAFCCSRLMTYLRGISYKVTVGTLVANEGWNASEDALTAVITAAYLTICHQRYLRTQAISKGMRRLEREHAQKFITPLYSWLFEKSGRDYIPGRQLEFYAQCRRWLSAGFHLDPRVLVFDESAPCRCRTAIRKALSKFCCFMKWLGQECTCFLQPAEGVVGDQGHDNEAYEGSDVDPAESAISDISGSYVVPGTALQPLYQALDLPAEIVARAGRLTATVKVSQVDGRIDCETLLGNKTFRTSFVDGAVLEANGPERYNLSFDASQSTMAAGPFSLTYAASAAGLEVRYVAAGLDHRAVFAPGVSPRSAPGEVTAFCSALYRFNREAQRHSLTGNLWFHPEGLIGLFAPFSPGHVWESANPFCGESTLYTRTWSEVDAVSSPARPDLGLMSEPSIPSRAATPTLAVLLPPPAPDPPPPPSAPALDEPASGATAGAPAITHQTARHRRLLFTYPDGSKVFAGSLFESTCTWLVNASNVDHRPGGGLCHAFYQRYPASFDAASFVMRDGAAAYTLTPRPIIHAVAPDYRLEHNPKRLEAAYRETCSRLGTAAYSLLGTGIYQVPIGPSFDAWERNHRPGDELYLPELAARWFEANRPTRPTLTITEDVARTANLAIELDSATDVGRACAGCRVTPGVVQYQFTAGVPGSGKSRSITQADVDVVVVPTRELRNAWRRRGFAAFNPHTAARVTQGRRVVIDEAPSLPPHLLLLHMQRAATVHLLGDPNQIPAIDFEHAGLVPAIRPDLGPTSWWHVTHRCPADVCELIRGAYPMIQTTSRVLRSLFWGEPAVGQKLVFTQAAKAANPGSVTVHEAQGATYTETTIIATADARGLIQSSRAHAIVALTRHTEKFVIIDAPGLLREVGISDAIVNNFFLAGGEIGHQRPSVIPRGNPDANVDTLAAFPPSCQISAFHQLAEELGHRPVPVAAVLPPCPELEQGLLYLPQGLTACDSVVTFELTDIVHCRMAAPNQRKAVLSTLVGRYGRRTKLYNASHSDVRDSLARFIPAIGPVQVTTCELYELVEAMVEKGQDGSAVLELDLCNRDVSRITFFQKDCNKFTTGETIAHGKVGQGISAWSKTFCALFGPWFRAIEKAILALLPQGVFYGDAFDDTVFSAAVAAAKASMVFENDFSEFDSTQNNFSLGLECAIMEECGMPQWLIRLYHLIRSAWILQAPKESLRGFWKKHSGEPGTLLWNTVWNMAVITHCYDFRDFQVAAFKGDDSIVLCSEYRQSPGAAVLIAGCGLKLKVDFRPIGLYAGVVVAPGLGALPDVVRFAGRLTEKNWGPGPERAEQLRLAVSDFLRKLTNVAQMCVDVVSRVYGVSPGLVHNLIGMLQAVADGKAHFTESVKPVLDLTNSILCRVE</sequence>
<proteinExistence type="evidence at protein level"/>
<accession>Q04610</accession>
<keyword id="KW-0067">ATP-binding</keyword>
<keyword id="KW-1015">Disulfide bond</keyword>
<keyword id="KW-0347">Helicase</keyword>
<keyword id="KW-1035">Host cytoplasm</keyword>
<keyword id="KW-0378">Hydrolase</keyword>
<keyword id="KW-0460">Magnesium</keyword>
<keyword id="KW-0479">Metal-binding</keyword>
<keyword id="KW-0489">Methyltransferase</keyword>
<keyword id="KW-0547">Nucleotide-binding</keyword>
<keyword id="KW-0548">Nucleotidyltransferase</keyword>
<keyword id="KW-0645">Protease</keyword>
<keyword id="KW-0694">RNA-binding</keyword>
<keyword id="KW-0696">RNA-directed RNA polymerase</keyword>
<keyword id="KW-0788">Thiol protease</keyword>
<keyword id="KW-0808">Transferase</keyword>
<keyword id="KW-0693">Viral RNA replication</keyword>
<keyword id="KW-0862">Zinc</keyword>
<feature type="chain" id="PRO_0000100134" description="Non-structural polyprotein pORF1">
    <location>
        <begin position="1"/>
        <end position="1693"/>
    </location>
</feature>
<feature type="domain" description="Alphavirus-like MT" evidence="9">
    <location>
        <begin position="56"/>
        <end position="240"/>
    </location>
</feature>
<feature type="domain" description="Macro" evidence="7">
    <location>
        <begin position="775"/>
        <end position="921"/>
    </location>
</feature>
<feature type="domain" description="(+)RNA virus helicase ATP-binding">
    <location>
        <begin position="934"/>
        <end position="1082"/>
    </location>
</feature>
<feature type="domain" description="(+)RNA virus helicase C-terminal">
    <location>
        <begin position="1083"/>
        <end position="1216"/>
    </location>
</feature>
<feature type="domain" description="RdRp catalytic" evidence="8">
    <location>
        <begin position="1454"/>
        <end position="1565"/>
    </location>
</feature>
<feature type="region of interest" description="Methyltransferase" evidence="1">
    <location>
        <begin position="60"/>
        <end position="240"/>
    </location>
</feature>
<feature type="region of interest" description="Y-domain" evidence="4">
    <location>
        <begin position="241"/>
        <end position="439"/>
    </location>
</feature>
<feature type="region of interest" description="Putative protease" evidence="3">
    <location>
        <begin position="442"/>
        <end position="509"/>
    </location>
</feature>
<feature type="region of interest" description="Zinc-binding" evidence="3">
    <location>
        <begin position="510"/>
        <end position="691"/>
    </location>
</feature>
<feature type="region of interest" description="Hinge" evidence="1">
    <location>
        <begin position="712"/>
        <end position="778"/>
    </location>
</feature>
<feature type="region of interest" description="Disordered" evidence="10">
    <location>
        <begin position="737"/>
        <end position="769"/>
    </location>
</feature>
<feature type="region of interest" description="X-domain" evidence="1">
    <location>
        <begin position="785"/>
        <end position="942"/>
    </location>
</feature>
<feature type="region of interest" description="NTPase/helicase" evidence="1">
    <location>
        <begin position="960"/>
        <end position="1204"/>
    </location>
</feature>
<feature type="region of interest" description="RNA-directed RNA polymerase" evidence="1">
    <location>
        <begin position="1207"/>
        <end position="1693"/>
    </location>
</feature>
<feature type="compositionally biased region" description="Pro residues" evidence="10">
    <location>
        <begin position="740"/>
        <end position="753"/>
    </location>
</feature>
<feature type="binding site" evidence="3">
    <location>
        <position position="671"/>
    </location>
    <ligand>
        <name>Zn(2+)</name>
        <dbReference type="ChEBI" id="CHEBI:29105"/>
    </ligand>
</feature>
<feature type="binding site" evidence="3">
    <location>
        <position position="673"/>
    </location>
    <ligand>
        <name>Zn(2+)</name>
        <dbReference type="ChEBI" id="CHEBI:29105"/>
    </ligand>
</feature>
<feature type="binding site" evidence="3">
    <location>
        <position position="686"/>
    </location>
    <ligand>
        <name>Zn(2+)</name>
        <dbReference type="ChEBI" id="CHEBI:29105"/>
    </ligand>
</feature>
<feature type="binding site" evidence="6">
    <location>
        <begin position="975"/>
        <end position="982"/>
    </location>
    <ligand>
        <name>ATP</name>
        <dbReference type="ChEBI" id="CHEBI:30616"/>
    </ligand>
</feature>
<feature type="disulfide bond" evidence="4">
    <location>
        <begin position="434"/>
        <end position="481"/>
    </location>
</feature>
<comment type="function">
    <text evidence="4">Methyltransferase: Displays a capping enzyme activity. This function is necessary since all viral RNAs are synthesized in the cytoplasm, and host capping enzymes are restricted to the nucleus. The enzymatic reaction involves a covalent link between 7-methyl-GMP and the methyltransferase, whereas eukaryotic capping enzymes form a covalent complex only with GMP. Methyltransferase catalyzes transfer of a methyl group from S-adenosylmethionine to GTP and GDP to yield m(7)GTP or m(7)GDP. GDP is a better substrate than GTP. This enzyme also displays guanylyltransferase activity to form a covalent complex, methyltransferase-m(7)GMP, from which 7-methyl-GMP is transferred to the mRNA to create the cap structure.</text>
</comment>
<comment type="function">
    <text evidence="4">Y-domain: Indispensable for virus replication.</text>
</comment>
<comment type="function">
    <text evidence="4">Putative protease: The putative protease domain although necessary for replication of the virus may not be a protease but rather a structural Zn(2+)-binding domain. Inhibits induction of IFN-beta by MDA5 and RIG-I pathways and down-regulates the expression of MDA5.</text>
</comment>
<comment type="function">
    <text evidence="2 4">NTPase/helicase: Multi-functional protein that exhibits NTPase and RNA unwinding activities (By similarity). Hydrolyzes all NTPs efficiently and unwinds RNA duplexes containing 5' overhangs (By similarity). Possesses a sequence independent RNA-5'-triphosphatase (RTPase) activity suggestive of its role in forming viral cap structure. Also participates in viral genome replication, RNA translocation and genome packaging/unpackaging (By similarity).</text>
</comment>
<comment type="function">
    <text evidence="4 5">RNA-directed RNA polymerase: Plays an essential role in the virus replication (By similarity). Binds to the 3'-end of the genomic RNA to initiate viral replication (By similarity).</text>
</comment>
<comment type="catalytic activity">
    <reaction evidence="8">
        <text>RNA(n) + a ribonucleoside 5'-triphosphate = RNA(n+1) + diphosphate</text>
        <dbReference type="Rhea" id="RHEA:21248"/>
        <dbReference type="Rhea" id="RHEA-COMP:14527"/>
        <dbReference type="Rhea" id="RHEA-COMP:17342"/>
        <dbReference type="ChEBI" id="CHEBI:33019"/>
        <dbReference type="ChEBI" id="CHEBI:61557"/>
        <dbReference type="ChEBI" id="CHEBI:140395"/>
        <dbReference type="EC" id="2.7.7.48"/>
    </reaction>
</comment>
<comment type="catalytic activity">
    <reaction evidence="4">
        <text>GTP + S-adenosyl-L-methionine = N(7)-methyl-GTP + S-adenosyl-L-homocysteine</text>
        <dbReference type="Rhea" id="RHEA:46948"/>
        <dbReference type="ChEBI" id="CHEBI:37565"/>
        <dbReference type="ChEBI" id="CHEBI:57856"/>
        <dbReference type="ChEBI" id="CHEBI:59789"/>
        <dbReference type="ChEBI" id="CHEBI:87133"/>
    </reaction>
    <physiologicalReaction direction="left-to-right" evidence="4">
        <dbReference type="Rhea" id="RHEA:46949"/>
    </physiologicalReaction>
</comment>
<comment type="cofactor">
    <cofactor evidence="4">
        <name>Mg(2+)</name>
        <dbReference type="ChEBI" id="CHEBI:18420"/>
    </cofactor>
    <text evidence="4">For methyltransferase activity.</text>
</comment>
<comment type="activity regulation">
    <text evidence="4">Putative protease: Inhibited by chymostatin.</text>
</comment>
<comment type="subunit">
    <text evidence="3">The protease domain interacts with host EIF2AK4 (via C-terminus); this interaction inhibits dimerization of EIF2AK4 and prevents EIF2AK4-mediated phosphorylation of host EIF2A.</text>
</comment>
<comment type="subcellular location">
    <subcellularLocation>
        <location evidence="4">Host cytoplasm</location>
    </subcellularLocation>
    <subcellularLocation>
        <location evidence="4">Host cytoplasm</location>
        <location evidence="4">Host perinuclear region</location>
    </subcellularLocation>
</comment>
<comment type="domain">
    <text evidence="3 4">Contains a methyltransferase domain, a Y-domain, a putative protease region, a zinc-binding region with similarity to calycins, a proline-rich disordered hypervariable region (HVR), a macro domain (also called X-domain), a helicase domain and an RNA-dependent RNA polymerase domain (By similarity). Since the boundaries and the activity of the putative protease are not clearly defined, the zinc-binding region might be part of the putative protease (By similarity).</text>
</comment>
<comment type="PTM">
    <text evidence="4">ORF1 polyprotein does not seem to be processed into distinct enzymatic domains by a viral protease belonging to ORF1, but could be processed by a host serine protease like thrombin.</text>
</comment>
<comment type="similarity">
    <text evidence="12">Belongs to the hepevirus non-structural polyprotein family.</text>
</comment>
<organismHost>
    <name type="scientific">Homo sapiens</name>
    <name type="common">Human</name>
    <dbReference type="NCBI Taxonomy" id="9606"/>
</organismHost>
<protein>
    <recommendedName>
        <fullName>Non-structural polyprotein pORF1</fullName>
    </recommendedName>
    <domain>
        <recommendedName>
            <fullName>Methyltransferase</fullName>
            <ecNumber evidence="11">2.1.1.-</ecNumber>
            <ecNumber evidence="4">2.7.7.-</ecNumber>
        </recommendedName>
    </domain>
    <domain>
        <recommendedName>
            <fullName>Putative protease</fullName>
            <ecNumber evidence="4">3.4.-.-</ecNumber>
        </recommendedName>
        <alternativeName>
            <fullName evidence="3">Putative papain-like cysteine protease</fullName>
            <shortName evidence="3">PCP</shortName>
        </alternativeName>
    </domain>
    <domain>
        <recommendedName>
            <fullName>NTPase/helicase</fullName>
            <ecNumber evidence="4">3.6.4.-</ecNumber>
        </recommendedName>
    </domain>
    <domain>
        <recommendedName>
            <fullName>RNA-directed RNA polymerase</fullName>
            <shortName>RdRp</shortName>
            <ecNumber>2.7.7.48</ecNumber>
        </recommendedName>
    </domain>
</protein>